<protein>
    <recommendedName>
        <fullName evidence="1">Cytochrome b6-f complex subunit 6</fullName>
    </recommendedName>
    <alternativeName>
        <fullName evidence="1">Cytochrome b6-f complex subunit PetL</fullName>
    </alternativeName>
    <alternativeName>
        <fullName evidence="1">Cytochrome b6-f complex subunit VI</fullName>
    </alternativeName>
</protein>
<gene>
    <name evidence="1" type="primary">petL</name>
</gene>
<reference key="1">
    <citation type="journal article" date="2004" name="Nucleic Acids Res.">
        <title>Rapid evolution of RNA editing sites in a small non-essential plastid gene.</title>
        <authorList>
            <person name="Fiebig A."/>
            <person name="Stegemann S."/>
            <person name="Bock R."/>
        </authorList>
    </citation>
    <scope>NUCLEOTIDE SEQUENCE [GENOMIC DNA]</scope>
    <scope>RNA EDITING</scope>
    <source>
        <tissue>Leaf</tissue>
    </source>
</reference>
<comment type="function">
    <text evidence="1">Component of the cytochrome b6-f complex, which mediates electron transfer between photosystem II (PSII) and photosystem I (PSI), cyclic electron flow around PSI, and state transitions. PetL is important for photoautotrophic growth as well as for electron transfer efficiency and stability of the cytochrome b6-f complex.</text>
</comment>
<comment type="subunit">
    <text evidence="1">The 4 large subunits of the cytochrome b6-f complex are cytochrome b6, subunit IV (17 kDa polypeptide, PetD), cytochrome f and the Rieske protein, while the 4 small subunits are PetG, PetL, PetM and PetN. The complex functions as a dimer.</text>
</comment>
<comment type="subcellular location">
    <subcellularLocation>
        <location evidence="1">Plastid</location>
        <location evidence="1">Chloroplast thylakoid membrane</location>
        <topology evidence="1">Single-pass membrane protein</topology>
    </subcellularLocation>
</comment>
<comment type="RNA editing">
    <location>
        <position position="2" evidence="2"/>
    </location>
</comment>
<comment type="similarity">
    <text evidence="1">Belongs to the PetL family.</text>
</comment>
<name>PETL_BITBH</name>
<organism>
    <name type="scientific">Blitum bonus-henricus</name>
    <name type="common">Good King Henry</name>
    <name type="synonym">Chenopodium bonus-henricus</name>
    <dbReference type="NCBI Taxonomy" id="122298"/>
    <lineage>
        <taxon>Eukaryota</taxon>
        <taxon>Viridiplantae</taxon>
        <taxon>Streptophyta</taxon>
        <taxon>Embryophyta</taxon>
        <taxon>Tracheophyta</taxon>
        <taxon>Spermatophyta</taxon>
        <taxon>Magnoliopsida</taxon>
        <taxon>eudicotyledons</taxon>
        <taxon>Gunneridae</taxon>
        <taxon>Pentapetalae</taxon>
        <taxon>Caryophyllales</taxon>
        <taxon>Chenopodiaceae</taxon>
        <taxon>Chenopodioideae</taxon>
        <taxon>Anserineae</taxon>
        <taxon>Blitum</taxon>
    </lineage>
</organism>
<accession>Q5K3S8</accession>
<proteinExistence type="evidence at transcript level"/>
<feature type="chain" id="PRO_0000220443" description="Cytochrome b6-f complex subunit 6">
    <location>
        <begin position="1"/>
        <end position="31"/>
    </location>
</feature>
<feature type="transmembrane region" description="Helical" evidence="1">
    <location>
        <begin position="4"/>
        <end position="26"/>
    </location>
</feature>
<geneLocation type="chloroplast"/>
<dbReference type="EMBL" id="AJ704436">
    <property type="protein sequence ID" value="CAG28648.1"/>
    <property type="molecule type" value="Genomic_DNA"/>
</dbReference>
<dbReference type="SMR" id="Q5K3S8"/>
<dbReference type="GO" id="GO:0009535">
    <property type="term" value="C:chloroplast thylakoid membrane"/>
    <property type="evidence" value="ECO:0007669"/>
    <property type="project" value="UniProtKB-SubCell"/>
</dbReference>
<dbReference type="GO" id="GO:0009512">
    <property type="term" value="C:cytochrome b6f complex"/>
    <property type="evidence" value="ECO:0007669"/>
    <property type="project" value="InterPro"/>
</dbReference>
<dbReference type="GO" id="GO:0045158">
    <property type="term" value="F:electron transporter, transferring electrons within cytochrome b6/f complex of photosystem II activity"/>
    <property type="evidence" value="ECO:0007669"/>
    <property type="project" value="UniProtKB-UniRule"/>
</dbReference>
<dbReference type="GO" id="GO:0015979">
    <property type="term" value="P:photosynthesis"/>
    <property type="evidence" value="ECO:0007669"/>
    <property type="project" value="UniProtKB-KW"/>
</dbReference>
<dbReference type="HAMAP" id="MF_00433">
    <property type="entry name" value="Cytb6_f_PetL"/>
    <property type="match status" value="1"/>
</dbReference>
<dbReference type="InterPro" id="IPR007802">
    <property type="entry name" value="Cyt_b6/f_cplx_su6"/>
</dbReference>
<dbReference type="PANTHER" id="PTHR37266">
    <property type="entry name" value="CYTOCHROME B6-F COMPLEX SUBUNIT 6"/>
    <property type="match status" value="1"/>
</dbReference>
<dbReference type="PANTHER" id="PTHR37266:SF3">
    <property type="entry name" value="CYTOCHROME B6-F COMPLEX SUBUNIT 6"/>
    <property type="match status" value="1"/>
</dbReference>
<dbReference type="Pfam" id="PF05115">
    <property type="entry name" value="PetL"/>
    <property type="match status" value="1"/>
</dbReference>
<dbReference type="SUPFAM" id="SSF103436">
    <property type="entry name" value="PetL subunit of the cytochrome b6f complex"/>
    <property type="match status" value="1"/>
</dbReference>
<sequence>MFTLTSYFGFLLAALTITSALFIGLNKIRLI</sequence>
<evidence type="ECO:0000255" key="1">
    <source>
        <dbReference type="HAMAP-Rule" id="MF_00433"/>
    </source>
</evidence>
<evidence type="ECO:0000269" key="2">
    <source>
    </source>
</evidence>
<keyword id="KW-0150">Chloroplast</keyword>
<keyword id="KW-0249">Electron transport</keyword>
<keyword id="KW-0472">Membrane</keyword>
<keyword id="KW-0602">Photosynthesis</keyword>
<keyword id="KW-0934">Plastid</keyword>
<keyword id="KW-0691">RNA editing</keyword>
<keyword id="KW-0793">Thylakoid</keyword>
<keyword id="KW-0812">Transmembrane</keyword>
<keyword id="KW-1133">Transmembrane helix</keyword>
<keyword id="KW-0813">Transport</keyword>